<name>DN7_SULTO</name>
<protein>
    <recommendedName>
        <fullName evidence="5">DNA-binding protein 7</fullName>
    </recommendedName>
    <alternativeName>
        <fullName evidence="4">Sto7</fullName>
    </alternativeName>
</protein>
<sequence>MVTVKFKYKGEEKEVDISKIKKVWRVGKMISFTYDDNGKTGRGAVSEKDAPKELLQMLEKSGKK</sequence>
<evidence type="ECO:0000250" key="1"/>
<evidence type="ECO:0000250" key="2">
    <source>
        <dbReference type="UniProtKB" id="P61990"/>
    </source>
</evidence>
<evidence type="ECO:0000269" key="3">
    <source>
    </source>
</evidence>
<evidence type="ECO:0000303" key="4">
    <source>
    </source>
</evidence>
<evidence type="ECO:0000305" key="5"/>
<comment type="function">
    <text evidence="2">Can constrain negative DNA supercoils. May be involved in maintaining the integrity of the genome at high temperature.</text>
</comment>
<comment type="biophysicochemical properties">
    <phDependence>
        <text evidence="3">Highly stable from pH 0 to pH 12.</text>
    </phDependence>
    <temperatureDependence>
        <text evidence="3">Hyperthermostable.</text>
    </temperatureDependence>
</comment>
<comment type="subunit">
    <text evidence="3">Monomer.</text>
</comment>
<comment type="subcellular location">
    <subcellularLocation>
        <location evidence="3">Cytoplasm</location>
    </subcellularLocation>
</comment>
<comment type="similarity">
    <text evidence="5">Belongs to the 7 kDa DNA-binding/endoribonuclease P2 family.</text>
</comment>
<keyword id="KW-0963">Cytoplasm</keyword>
<keyword id="KW-0238">DNA-binding</keyword>
<keyword id="KW-0488">Methylation</keyword>
<keyword id="KW-1185">Reference proteome</keyword>
<accession>Q96X56</accession>
<gene>
    <name type="ordered locus">STK_06395</name>
    <name type="ORF">STS077</name>
</gene>
<gene>
    <name type="ordered locus">STK_20955</name>
    <name type="ORF">STS226</name>
</gene>
<feature type="initiator methionine" description="Removed" evidence="1">
    <location>
        <position position="1"/>
    </location>
</feature>
<feature type="chain" id="PRO_0000213080" description="DNA-binding protein 7">
    <location>
        <begin position="2"/>
        <end position="64"/>
    </location>
</feature>
<feature type="modified residue" description="N6-methyllysine" evidence="1">
    <location>
        <position position="5"/>
    </location>
</feature>
<feature type="modified residue" description="N6-methyllysine" evidence="1">
    <location>
        <position position="7"/>
    </location>
</feature>
<proteinExistence type="evidence at protein level"/>
<reference key="1">
    <citation type="journal article" date="2001" name="DNA Res.">
        <title>Complete genome sequence of an aerobic thermoacidophilic Crenarchaeon, Sulfolobus tokodaii strain7.</title>
        <authorList>
            <person name="Kawarabayasi Y."/>
            <person name="Hino Y."/>
            <person name="Horikawa H."/>
            <person name="Jin-no K."/>
            <person name="Takahashi M."/>
            <person name="Sekine M."/>
            <person name="Baba S."/>
            <person name="Ankai A."/>
            <person name="Kosugi H."/>
            <person name="Hosoyama A."/>
            <person name="Fukui S."/>
            <person name="Nagai Y."/>
            <person name="Nishijima K."/>
            <person name="Otsuka R."/>
            <person name="Nakazawa H."/>
            <person name="Takamiya M."/>
            <person name="Kato Y."/>
            <person name="Yoshizawa T."/>
            <person name="Tanaka T."/>
            <person name="Kudoh Y."/>
            <person name="Yamazaki J."/>
            <person name="Kushida N."/>
            <person name="Oguchi A."/>
            <person name="Aoki K."/>
            <person name="Masuda S."/>
            <person name="Yanagii M."/>
            <person name="Nishimura M."/>
            <person name="Yamagishi A."/>
            <person name="Oshima T."/>
            <person name="Kikuchi H."/>
        </authorList>
    </citation>
    <scope>NUCLEOTIDE SEQUENCE [LARGE SCALE GENOMIC DNA]</scope>
    <source>
        <strain>DSM 16993 / JCM 10545 / NBRC 100140 / 7</strain>
    </source>
</reference>
<reference key="2">
    <citation type="journal article" date="2016" name="Sci. Rep.">
        <title>The archaeal '7 kDa DNA-binding' proteins: extended characterization of an old gifted family.</title>
        <authorList>
            <person name="Kalichuk V."/>
            <person name="Behar G."/>
            <person name="Renodon-Corniere A."/>
            <person name="Danovski G."/>
            <person name="Obal G."/>
            <person name="Barbet J."/>
            <person name="Mouratou B."/>
            <person name="Pecorari F."/>
        </authorList>
    </citation>
    <scope>DNA-BINDING</scope>
    <scope>BIOPHYSICOCHEMICAL PROPERTIES</scope>
    <scope>SUBUNIT</scope>
    <scope>SUBCELLULAR LOCATION</scope>
    <scope>NOMENCLATURE</scope>
</reference>
<dbReference type="EMBL" id="BA000023">
    <property type="protein sequence ID" value="BAB65638.1"/>
    <property type="molecule type" value="Genomic_DNA"/>
</dbReference>
<dbReference type="EMBL" id="BA000023">
    <property type="protein sequence ID" value="BAB67199.1"/>
    <property type="molecule type" value="Genomic_DNA"/>
</dbReference>
<dbReference type="SMR" id="Q96X56"/>
<dbReference type="STRING" id="273063.STK_06395"/>
<dbReference type="KEGG" id="sto:STK_06395"/>
<dbReference type="KEGG" id="sto:STK_20955"/>
<dbReference type="PATRIC" id="fig|273063.9.peg.2387"/>
<dbReference type="eggNOG" id="arCOG05888">
    <property type="taxonomic scope" value="Archaea"/>
</dbReference>
<dbReference type="OrthoDB" id="33867at2157"/>
<dbReference type="Proteomes" id="UP000001015">
    <property type="component" value="Chromosome"/>
</dbReference>
<dbReference type="GO" id="GO:0005737">
    <property type="term" value="C:cytoplasm"/>
    <property type="evidence" value="ECO:0007669"/>
    <property type="project" value="UniProtKB-SubCell"/>
</dbReference>
<dbReference type="GO" id="GO:0003677">
    <property type="term" value="F:DNA binding"/>
    <property type="evidence" value="ECO:0007669"/>
    <property type="project" value="UniProtKB-KW"/>
</dbReference>
<dbReference type="GO" id="GO:0004521">
    <property type="term" value="F:RNA endonuclease activity"/>
    <property type="evidence" value="ECO:0007669"/>
    <property type="project" value="InterPro"/>
</dbReference>
<dbReference type="Gene3D" id="2.40.50.40">
    <property type="match status" value="1"/>
</dbReference>
<dbReference type="InterPro" id="IPR016197">
    <property type="entry name" value="Chromo-like_dom_sf"/>
</dbReference>
<dbReference type="InterPro" id="IPR003212">
    <property type="entry name" value="DNA-bd_7a-e_arc"/>
</dbReference>
<dbReference type="NCBIfam" id="NF045555">
    <property type="entry name" value="Sul7d"/>
    <property type="match status" value="1"/>
</dbReference>
<dbReference type="Pfam" id="PF02294">
    <property type="entry name" value="7kD_DNA_binding"/>
    <property type="match status" value="1"/>
</dbReference>
<dbReference type="PIRSF" id="PIRSF036912">
    <property type="entry name" value="Sac7"/>
    <property type="match status" value="1"/>
</dbReference>
<dbReference type="SUPFAM" id="SSF54160">
    <property type="entry name" value="Chromo domain-like"/>
    <property type="match status" value="1"/>
</dbReference>
<organism>
    <name type="scientific">Sulfurisphaera tokodaii (strain DSM 16993 / JCM 10545 / NBRC 100140 / 7)</name>
    <name type="common">Sulfolobus tokodaii</name>
    <dbReference type="NCBI Taxonomy" id="273063"/>
    <lineage>
        <taxon>Archaea</taxon>
        <taxon>Thermoproteota</taxon>
        <taxon>Thermoprotei</taxon>
        <taxon>Sulfolobales</taxon>
        <taxon>Sulfolobaceae</taxon>
        <taxon>Sulfurisphaera</taxon>
    </lineage>
</organism>